<accession>Q24U40</accession>
<keyword id="KW-0012">Acyltransferase</keyword>
<keyword id="KW-0963">Cytoplasm</keyword>
<keyword id="KW-0275">Fatty acid biosynthesis</keyword>
<keyword id="KW-0276">Fatty acid metabolism</keyword>
<keyword id="KW-0444">Lipid biosynthesis</keyword>
<keyword id="KW-0443">Lipid metabolism</keyword>
<keyword id="KW-0511">Multifunctional enzyme</keyword>
<keyword id="KW-1185">Reference proteome</keyword>
<keyword id="KW-0808">Transferase</keyword>
<reference key="1">
    <citation type="journal article" date="2006" name="J. Bacteriol.">
        <title>Complete genome sequence of the dehalorespiring bacterium Desulfitobacterium hafniense Y51 and comparison with Dehalococcoides ethenogenes 195.</title>
        <authorList>
            <person name="Nonaka H."/>
            <person name="Keresztes G."/>
            <person name="Shinoda Y."/>
            <person name="Ikenaga Y."/>
            <person name="Abe M."/>
            <person name="Naito K."/>
            <person name="Inatomi K."/>
            <person name="Furukawa K."/>
            <person name="Inui M."/>
            <person name="Yukawa H."/>
        </authorList>
    </citation>
    <scope>NUCLEOTIDE SEQUENCE [LARGE SCALE GENOMIC DNA]</scope>
    <source>
        <strain>Y51</strain>
    </source>
</reference>
<comment type="function">
    <text evidence="1">Catalyzes the condensation reaction of fatty acid synthesis by the addition to an acyl acceptor of two carbons from malonyl-ACP. Catalyzes the first condensation reaction which initiates fatty acid synthesis and may therefore play a role in governing the total rate of fatty acid production. Possesses both acetoacetyl-ACP synthase and acetyl transacylase activities. Its substrate specificity determines the biosynthesis of branched-chain and/or straight-chain of fatty acids.</text>
</comment>
<comment type="catalytic activity">
    <reaction evidence="1">
        <text>malonyl-[ACP] + acetyl-CoA + H(+) = 3-oxobutanoyl-[ACP] + CO2 + CoA</text>
        <dbReference type="Rhea" id="RHEA:12080"/>
        <dbReference type="Rhea" id="RHEA-COMP:9623"/>
        <dbReference type="Rhea" id="RHEA-COMP:9625"/>
        <dbReference type="ChEBI" id="CHEBI:15378"/>
        <dbReference type="ChEBI" id="CHEBI:16526"/>
        <dbReference type="ChEBI" id="CHEBI:57287"/>
        <dbReference type="ChEBI" id="CHEBI:57288"/>
        <dbReference type="ChEBI" id="CHEBI:78449"/>
        <dbReference type="ChEBI" id="CHEBI:78450"/>
        <dbReference type="EC" id="2.3.1.180"/>
    </reaction>
</comment>
<comment type="pathway">
    <text evidence="1">Lipid metabolism; fatty acid biosynthesis.</text>
</comment>
<comment type="subunit">
    <text evidence="1">Homodimer.</text>
</comment>
<comment type="subcellular location">
    <subcellularLocation>
        <location evidence="1">Cytoplasm</location>
    </subcellularLocation>
</comment>
<comment type="domain">
    <text evidence="1">The last Arg residue of the ACP-binding site is essential for the weak association between ACP/AcpP and FabH.</text>
</comment>
<comment type="similarity">
    <text evidence="1">Belongs to the thiolase-like superfamily. FabH family.</text>
</comment>
<name>FABH_DESHY</name>
<feature type="chain" id="PRO_1000187865" description="Beta-ketoacyl-[acyl-carrier-protein] synthase III">
    <location>
        <begin position="1"/>
        <end position="331"/>
    </location>
</feature>
<feature type="region of interest" description="ACP-binding" evidence="1">
    <location>
        <begin position="254"/>
        <end position="258"/>
    </location>
</feature>
<feature type="active site" evidence="1">
    <location>
        <position position="113"/>
    </location>
</feature>
<feature type="active site" evidence="1">
    <location>
        <position position="253"/>
    </location>
</feature>
<feature type="active site" evidence="1">
    <location>
        <position position="283"/>
    </location>
</feature>
<evidence type="ECO:0000255" key="1">
    <source>
        <dbReference type="HAMAP-Rule" id="MF_01815"/>
    </source>
</evidence>
<dbReference type="EC" id="2.3.1.180" evidence="1"/>
<dbReference type="EMBL" id="AP008230">
    <property type="protein sequence ID" value="BAE84452.1"/>
    <property type="molecule type" value="Genomic_DNA"/>
</dbReference>
<dbReference type="RefSeq" id="WP_011460503.1">
    <property type="nucleotide sequence ID" value="NC_007907.1"/>
</dbReference>
<dbReference type="SMR" id="Q24U40"/>
<dbReference type="STRING" id="138119.DSY2663"/>
<dbReference type="KEGG" id="dsy:DSY2663"/>
<dbReference type="eggNOG" id="COG0332">
    <property type="taxonomic scope" value="Bacteria"/>
</dbReference>
<dbReference type="HOGENOM" id="CLU_039592_3_1_9"/>
<dbReference type="UniPathway" id="UPA00094"/>
<dbReference type="Proteomes" id="UP000001946">
    <property type="component" value="Chromosome"/>
</dbReference>
<dbReference type="GO" id="GO:0005737">
    <property type="term" value="C:cytoplasm"/>
    <property type="evidence" value="ECO:0007669"/>
    <property type="project" value="UniProtKB-SubCell"/>
</dbReference>
<dbReference type="GO" id="GO:0004315">
    <property type="term" value="F:3-oxoacyl-[acyl-carrier-protein] synthase activity"/>
    <property type="evidence" value="ECO:0007669"/>
    <property type="project" value="InterPro"/>
</dbReference>
<dbReference type="GO" id="GO:0033818">
    <property type="term" value="F:beta-ketoacyl-acyl-carrier-protein synthase III activity"/>
    <property type="evidence" value="ECO:0007669"/>
    <property type="project" value="UniProtKB-UniRule"/>
</dbReference>
<dbReference type="GO" id="GO:0006633">
    <property type="term" value="P:fatty acid biosynthetic process"/>
    <property type="evidence" value="ECO:0007669"/>
    <property type="project" value="UniProtKB-UniRule"/>
</dbReference>
<dbReference type="GO" id="GO:0044550">
    <property type="term" value="P:secondary metabolite biosynthetic process"/>
    <property type="evidence" value="ECO:0007669"/>
    <property type="project" value="TreeGrafter"/>
</dbReference>
<dbReference type="CDD" id="cd00830">
    <property type="entry name" value="KAS_III"/>
    <property type="match status" value="1"/>
</dbReference>
<dbReference type="FunFam" id="3.40.47.10:FF:000004">
    <property type="entry name" value="3-oxoacyl-[acyl-carrier-protein] synthase 3"/>
    <property type="match status" value="1"/>
</dbReference>
<dbReference type="Gene3D" id="3.40.47.10">
    <property type="match status" value="1"/>
</dbReference>
<dbReference type="HAMAP" id="MF_01815">
    <property type="entry name" value="FabH"/>
    <property type="match status" value="1"/>
</dbReference>
<dbReference type="InterPro" id="IPR013747">
    <property type="entry name" value="ACP_syn_III_C"/>
</dbReference>
<dbReference type="InterPro" id="IPR013751">
    <property type="entry name" value="ACP_syn_III_N"/>
</dbReference>
<dbReference type="InterPro" id="IPR004655">
    <property type="entry name" value="FabH"/>
</dbReference>
<dbReference type="InterPro" id="IPR016039">
    <property type="entry name" value="Thiolase-like"/>
</dbReference>
<dbReference type="NCBIfam" id="TIGR00747">
    <property type="entry name" value="fabH"/>
    <property type="match status" value="1"/>
</dbReference>
<dbReference type="NCBIfam" id="NF006829">
    <property type="entry name" value="PRK09352.1"/>
    <property type="match status" value="1"/>
</dbReference>
<dbReference type="PANTHER" id="PTHR34069">
    <property type="entry name" value="3-OXOACYL-[ACYL-CARRIER-PROTEIN] SYNTHASE 3"/>
    <property type="match status" value="1"/>
</dbReference>
<dbReference type="PANTHER" id="PTHR34069:SF2">
    <property type="entry name" value="BETA-KETOACYL-[ACYL-CARRIER-PROTEIN] SYNTHASE III"/>
    <property type="match status" value="1"/>
</dbReference>
<dbReference type="Pfam" id="PF08545">
    <property type="entry name" value="ACP_syn_III"/>
    <property type="match status" value="1"/>
</dbReference>
<dbReference type="Pfam" id="PF08541">
    <property type="entry name" value="ACP_syn_III_C"/>
    <property type="match status" value="1"/>
</dbReference>
<dbReference type="SUPFAM" id="SSF53901">
    <property type="entry name" value="Thiolase-like"/>
    <property type="match status" value="1"/>
</dbReference>
<proteinExistence type="inferred from homology"/>
<sequence length="331" mass="34706">MVSVGIVGTGSYVPDKVLTNFDLEQMVDTNDQWIVSRTGIKERHIAEPETPVSELCYQAAVRALEDAKLAPEELDLVIVATITPDFVFPATACLVAERLGAKKAAGFDLQAACTGFLYGVATAAQFIATGIYKNALVIGGETLSKILNWEDRGTCILFGDGAGAAVLQQVEEGYGFLGYDLGMDGAGGSLLTMPGGGSMHPASAETVAKKMHTIQMAGSEVFKFAVRIMGETALKALDKAGLGIGDVDCLIPHQANTRIVDAAVKRLGIDAGKVVVNLDRYGNMSAASIPVALDEAARSGRLNYGDIMVMVGFGGGLTWGAAVVKWSKRGV</sequence>
<gene>
    <name evidence="1" type="primary">fabH</name>
    <name type="ordered locus">DSY2663</name>
</gene>
<protein>
    <recommendedName>
        <fullName evidence="1">Beta-ketoacyl-[acyl-carrier-protein] synthase III</fullName>
        <shortName evidence="1">Beta-ketoacyl-ACP synthase III</shortName>
        <shortName evidence="1">KAS III</shortName>
        <ecNumber evidence="1">2.3.1.180</ecNumber>
    </recommendedName>
    <alternativeName>
        <fullName evidence="1">3-oxoacyl-[acyl-carrier-protein] synthase 3</fullName>
    </alternativeName>
    <alternativeName>
        <fullName evidence="1">3-oxoacyl-[acyl-carrier-protein] synthase III</fullName>
    </alternativeName>
</protein>
<organism>
    <name type="scientific">Desulfitobacterium hafniense (strain Y51)</name>
    <dbReference type="NCBI Taxonomy" id="138119"/>
    <lineage>
        <taxon>Bacteria</taxon>
        <taxon>Bacillati</taxon>
        <taxon>Bacillota</taxon>
        <taxon>Clostridia</taxon>
        <taxon>Eubacteriales</taxon>
        <taxon>Desulfitobacteriaceae</taxon>
        <taxon>Desulfitobacterium</taxon>
    </lineage>
</organism>